<feature type="chain" id="PRO_1000148130" description="Bifunctional protein HldE">
    <location>
        <begin position="1"/>
        <end position="474"/>
    </location>
</feature>
<feature type="region of interest" description="Ribokinase">
    <location>
        <begin position="1"/>
        <end position="318"/>
    </location>
</feature>
<feature type="region of interest" description="Cytidylyltransferase">
    <location>
        <begin position="344"/>
        <end position="474"/>
    </location>
</feature>
<feature type="active site" evidence="1">
    <location>
        <position position="264"/>
    </location>
</feature>
<feature type="binding site" evidence="1">
    <location>
        <begin position="195"/>
        <end position="198"/>
    </location>
    <ligand>
        <name>ATP</name>
        <dbReference type="ChEBI" id="CHEBI:30616"/>
    </ligand>
</feature>
<sequence length="474" mass="50750">MKVTLPDFNKANVLVVGDVMLDRYWYGPTSRISPEAPVPVVKVDTIEERPGGAANVAMNIASLGANSRLVGLTGIDEAAKALSNTLSQVNVRCDFVSIATHPTITKLRVLSRNQQLIRLDFEEGFSNVSPEPIYERIQQALPSMGALILSDYAKGALSHVQQMIQLAKKAGVPVLIDPKGSDFERYRGATLLTPNMSEFEQVVGVCHTDDELVEKGTQLVKDLALDALLITRSERGMSLLQANEAPLHLPTQAQEVYDVTGAGDTVIGVLATALAAGKPLAEACFLANAAAGVVVGKLGTSTVSPIELENAIRGRADNGFGIMEESQLKQAVALARQRGERIVMTNGCFDILHAGHVSYLANARKLGDRLIVAVNSDASTKRLKGESRPVNPLEQRMTVLGALGAVDWVVAFEEDTPQRLIASVLPDILVKGGDYKPEDIAGSKEVWAAGGEVKVLNFEDGISTTNIINAIKKK</sequence>
<reference key="1">
    <citation type="journal article" date="2008" name="J. Bacteriol.">
        <title>Complete genome sequence of uropathogenic Proteus mirabilis, a master of both adherence and motility.</title>
        <authorList>
            <person name="Pearson M.M."/>
            <person name="Sebaihia M."/>
            <person name="Churcher C."/>
            <person name="Quail M.A."/>
            <person name="Seshasayee A.S."/>
            <person name="Luscombe N.M."/>
            <person name="Abdellah Z."/>
            <person name="Arrosmith C."/>
            <person name="Atkin B."/>
            <person name="Chillingworth T."/>
            <person name="Hauser H."/>
            <person name="Jagels K."/>
            <person name="Moule S."/>
            <person name="Mungall K."/>
            <person name="Norbertczak H."/>
            <person name="Rabbinowitsch E."/>
            <person name="Walker D."/>
            <person name="Whithead S."/>
            <person name="Thomson N.R."/>
            <person name="Rather P.N."/>
            <person name="Parkhill J."/>
            <person name="Mobley H.L.T."/>
        </authorList>
    </citation>
    <scope>NUCLEOTIDE SEQUENCE [LARGE SCALE GENOMIC DNA]</scope>
    <source>
        <strain>HI4320</strain>
    </source>
</reference>
<keyword id="KW-0067">ATP-binding</keyword>
<keyword id="KW-0119">Carbohydrate metabolism</keyword>
<keyword id="KW-0418">Kinase</keyword>
<keyword id="KW-0511">Multifunctional enzyme</keyword>
<keyword id="KW-0547">Nucleotide-binding</keyword>
<keyword id="KW-0548">Nucleotidyltransferase</keyword>
<keyword id="KW-1185">Reference proteome</keyword>
<keyword id="KW-0808">Transferase</keyword>
<name>HLDE_PROMH</name>
<accession>B4EW46</accession>
<evidence type="ECO:0000255" key="1">
    <source>
        <dbReference type="HAMAP-Rule" id="MF_01603"/>
    </source>
</evidence>
<organism>
    <name type="scientific">Proteus mirabilis (strain HI4320)</name>
    <dbReference type="NCBI Taxonomy" id="529507"/>
    <lineage>
        <taxon>Bacteria</taxon>
        <taxon>Pseudomonadati</taxon>
        <taxon>Pseudomonadota</taxon>
        <taxon>Gammaproteobacteria</taxon>
        <taxon>Enterobacterales</taxon>
        <taxon>Morganellaceae</taxon>
        <taxon>Proteus</taxon>
    </lineage>
</organism>
<comment type="function">
    <text evidence="1">Catalyzes the phosphorylation of D-glycero-D-manno-heptose 7-phosphate at the C-1 position to selectively form D-glycero-beta-D-manno-heptose-1,7-bisphosphate.</text>
</comment>
<comment type="function">
    <text evidence="1">Catalyzes the ADP transfer from ATP to D-glycero-beta-D-manno-heptose 1-phosphate, yielding ADP-D-glycero-beta-D-manno-heptose.</text>
</comment>
<comment type="catalytic activity">
    <reaction evidence="1">
        <text>D-glycero-beta-D-manno-heptose 7-phosphate + ATP = D-glycero-beta-D-manno-heptose 1,7-bisphosphate + ADP + H(+)</text>
        <dbReference type="Rhea" id="RHEA:27473"/>
        <dbReference type="ChEBI" id="CHEBI:15378"/>
        <dbReference type="ChEBI" id="CHEBI:30616"/>
        <dbReference type="ChEBI" id="CHEBI:60204"/>
        <dbReference type="ChEBI" id="CHEBI:60208"/>
        <dbReference type="ChEBI" id="CHEBI:456216"/>
        <dbReference type="EC" id="2.7.1.167"/>
    </reaction>
</comment>
<comment type="catalytic activity">
    <reaction evidence="1">
        <text>D-glycero-beta-D-manno-heptose 1-phosphate + ATP + H(+) = ADP-D-glycero-beta-D-manno-heptose + diphosphate</text>
        <dbReference type="Rhea" id="RHEA:27465"/>
        <dbReference type="ChEBI" id="CHEBI:15378"/>
        <dbReference type="ChEBI" id="CHEBI:30616"/>
        <dbReference type="ChEBI" id="CHEBI:33019"/>
        <dbReference type="ChEBI" id="CHEBI:59967"/>
        <dbReference type="ChEBI" id="CHEBI:61593"/>
        <dbReference type="EC" id="2.7.7.70"/>
    </reaction>
</comment>
<comment type="pathway">
    <text evidence="1">Nucleotide-sugar biosynthesis; ADP-L-glycero-beta-D-manno-heptose biosynthesis; ADP-L-glycero-beta-D-manno-heptose from D-glycero-beta-D-manno-heptose 7-phosphate: step 1/4.</text>
</comment>
<comment type="pathway">
    <text evidence="1">Nucleotide-sugar biosynthesis; ADP-L-glycero-beta-D-manno-heptose biosynthesis; ADP-L-glycero-beta-D-manno-heptose from D-glycero-beta-D-manno-heptose 7-phosphate: step 3/4.</text>
</comment>
<comment type="subunit">
    <text evidence="1">Homodimer.</text>
</comment>
<comment type="similarity">
    <text evidence="1">In the N-terminal section; belongs to the carbohydrate kinase PfkB family.</text>
</comment>
<comment type="similarity">
    <text evidence="1">In the C-terminal section; belongs to the cytidylyltransferase family.</text>
</comment>
<proteinExistence type="inferred from homology"/>
<gene>
    <name evidence="1" type="primary">hldE</name>
    <name type="ordered locus">PMI2358</name>
</gene>
<dbReference type="EC" id="2.7.1.167" evidence="1"/>
<dbReference type="EC" id="2.7.7.70" evidence="1"/>
<dbReference type="EMBL" id="AM942759">
    <property type="protein sequence ID" value="CAR44655.1"/>
    <property type="molecule type" value="Genomic_DNA"/>
</dbReference>
<dbReference type="RefSeq" id="WP_004249466.1">
    <property type="nucleotide sequence ID" value="NC_010554.1"/>
</dbReference>
<dbReference type="SMR" id="B4EW46"/>
<dbReference type="EnsemblBacteria" id="CAR44655">
    <property type="protein sequence ID" value="CAR44655"/>
    <property type="gene ID" value="PMI2358"/>
</dbReference>
<dbReference type="GeneID" id="6800372"/>
<dbReference type="KEGG" id="pmr:PMI2358"/>
<dbReference type="eggNOG" id="COG0615">
    <property type="taxonomic scope" value="Bacteria"/>
</dbReference>
<dbReference type="eggNOG" id="COG2870">
    <property type="taxonomic scope" value="Bacteria"/>
</dbReference>
<dbReference type="HOGENOM" id="CLU_021150_2_1_6"/>
<dbReference type="UniPathway" id="UPA00356">
    <property type="reaction ID" value="UER00437"/>
</dbReference>
<dbReference type="UniPathway" id="UPA00356">
    <property type="reaction ID" value="UER00439"/>
</dbReference>
<dbReference type="Proteomes" id="UP000008319">
    <property type="component" value="Chromosome"/>
</dbReference>
<dbReference type="GO" id="GO:0005829">
    <property type="term" value="C:cytosol"/>
    <property type="evidence" value="ECO:0007669"/>
    <property type="project" value="TreeGrafter"/>
</dbReference>
<dbReference type="GO" id="GO:0005524">
    <property type="term" value="F:ATP binding"/>
    <property type="evidence" value="ECO:0007669"/>
    <property type="project" value="UniProtKB-UniRule"/>
</dbReference>
<dbReference type="GO" id="GO:0033785">
    <property type="term" value="F:heptose 7-phosphate kinase activity"/>
    <property type="evidence" value="ECO:0007669"/>
    <property type="project" value="UniProtKB-UniRule"/>
</dbReference>
<dbReference type="GO" id="GO:0033786">
    <property type="term" value="F:heptose-1-phosphate adenylyltransferase activity"/>
    <property type="evidence" value="ECO:0007669"/>
    <property type="project" value="UniProtKB-UniRule"/>
</dbReference>
<dbReference type="GO" id="GO:0016773">
    <property type="term" value="F:phosphotransferase activity, alcohol group as acceptor"/>
    <property type="evidence" value="ECO:0007669"/>
    <property type="project" value="InterPro"/>
</dbReference>
<dbReference type="GO" id="GO:0097171">
    <property type="term" value="P:ADP-L-glycero-beta-D-manno-heptose biosynthetic process"/>
    <property type="evidence" value="ECO:0007669"/>
    <property type="project" value="UniProtKB-UniPathway"/>
</dbReference>
<dbReference type="CDD" id="cd01172">
    <property type="entry name" value="RfaE_like"/>
    <property type="match status" value="1"/>
</dbReference>
<dbReference type="FunFam" id="3.40.1190.20:FF:000002">
    <property type="entry name" value="Bifunctional protein HldE"/>
    <property type="match status" value="1"/>
</dbReference>
<dbReference type="FunFam" id="3.40.50.620:FF:000028">
    <property type="entry name" value="Bifunctional protein HldE"/>
    <property type="match status" value="1"/>
</dbReference>
<dbReference type="Gene3D" id="3.40.1190.20">
    <property type="match status" value="1"/>
</dbReference>
<dbReference type="Gene3D" id="3.40.50.620">
    <property type="entry name" value="HUPs"/>
    <property type="match status" value="1"/>
</dbReference>
<dbReference type="HAMAP" id="MF_01603">
    <property type="entry name" value="HldE"/>
    <property type="match status" value="1"/>
</dbReference>
<dbReference type="InterPro" id="IPR023030">
    <property type="entry name" value="Bifunc_HldE"/>
</dbReference>
<dbReference type="InterPro" id="IPR002173">
    <property type="entry name" value="Carboh/pur_kinase_PfkB_CS"/>
</dbReference>
<dbReference type="InterPro" id="IPR004821">
    <property type="entry name" value="Cyt_trans-like"/>
</dbReference>
<dbReference type="InterPro" id="IPR011611">
    <property type="entry name" value="PfkB_dom"/>
</dbReference>
<dbReference type="InterPro" id="IPR011913">
    <property type="entry name" value="RfaE_dom_I"/>
</dbReference>
<dbReference type="InterPro" id="IPR011914">
    <property type="entry name" value="RfaE_dom_II"/>
</dbReference>
<dbReference type="InterPro" id="IPR029056">
    <property type="entry name" value="Ribokinase-like"/>
</dbReference>
<dbReference type="InterPro" id="IPR014729">
    <property type="entry name" value="Rossmann-like_a/b/a_fold"/>
</dbReference>
<dbReference type="NCBIfam" id="TIGR00125">
    <property type="entry name" value="cyt_tran_rel"/>
    <property type="match status" value="1"/>
</dbReference>
<dbReference type="NCBIfam" id="NF008454">
    <property type="entry name" value="PRK11316.1"/>
    <property type="match status" value="1"/>
</dbReference>
<dbReference type="NCBIfam" id="TIGR02198">
    <property type="entry name" value="rfaE_dom_I"/>
    <property type="match status" value="1"/>
</dbReference>
<dbReference type="NCBIfam" id="TIGR02199">
    <property type="entry name" value="rfaE_dom_II"/>
    <property type="match status" value="1"/>
</dbReference>
<dbReference type="PANTHER" id="PTHR46969">
    <property type="entry name" value="BIFUNCTIONAL PROTEIN HLDE"/>
    <property type="match status" value="1"/>
</dbReference>
<dbReference type="PANTHER" id="PTHR46969:SF1">
    <property type="entry name" value="BIFUNCTIONAL PROTEIN HLDE"/>
    <property type="match status" value="1"/>
</dbReference>
<dbReference type="Pfam" id="PF01467">
    <property type="entry name" value="CTP_transf_like"/>
    <property type="match status" value="1"/>
</dbReference>
<dbReference type="Pfam" id="PF00294">
    <property type="entry name" value="PfkB"/>
    <property type="match status" value="1"/>
</dbReference>
<dbReference type="SUPFAM" id="SSF52374">
    <property type="entry name" value="Nucleotidylyl transferase"/>
    <property type="match status" value="1"/>
</dbReference>
<dbReference type="SUPFAM" id="SSF53613">
    <property type="entry name" value="Ribokinase-like"/>
    <property type="match status" value="1"/>
</dbReference>
<dbReference type="PROSITE" id="PS00583">
    <property type="entry name" value="PFKB_KINASES_1"/>
    <property type="match status" value="1"/>
</dbReference>
<protein>
    <recommendedName>
        <fullName evidence="1">Bifunctional protein HldE</fullName>
    </recommendedName>
    <domain>
        <recommendedName>
            <fullName evidence="1">D-beta-D-heptose 7-phosphate kinase</fullName>
            <ecNumber evidence="1">2.7.1.167</ecNumber>
        </recommendedName>
        <alternativeName>
            <fullName evidence="1">D-beta-D-heptose 7-phosphotransferase</fullName>
        </alternativeName>
        <alternativeName>
            <fullName evidence="1">D-glycero-beta-D-manno-heptose-7-phosphate kinase</fullName>
        </alternativeName>
    </domain>
    <domain>
        <recommendedName>
            <fullName evidence="1">D-beta-D-heptose 1-phosphate adenylyltransferase</fullName>
            <ecNumber evidence="1">2.7.7.70</ecNumber>
        </recommendedName>
        <alternativeName>
            <fullName evidence="1">D-glycero-beta-D-manno-heptose 1-phosphate adenylyltransferase</fullName>
        </alternativeName>
    </domain>
</protein>